<evidence type="ECO:0000255" key="1">
    <source>
        <dbReference type="HAMAP-Rule" id="MF_01507"/>
    </source>
</evidence>
<name>Y1674_STAA9</name>
<sequence>MENFDKTMKFDYEELPTQDVRDVLNNVYRTLDERGYNAVNQIVGYLLSGDPAYIPRQNEARNQIRHIDRDVIMEELVSYYLKEQNK</sequence>
<comment type="similarity">
    <text evidence="1">Belongs to the UPF0297 family.</text>
</comment>
<gene>
    <name type="ordered locus">SaurJH9_1674</name>
</gene>
<proteinExistence type="inferred from homology"/>
<accession>A5ITE2</accession>
<organism>
    <name type="scientific">Staphylococcus aureus (strain JH9)</name>
    <dbReference type="NCBI Taxonomy" id="359786"/>
    <lineage>
        <taxon>Bacteria</taxon>
        <taxon>Bacillati</taxon>
        <taxon>Bacillota</taxon>
        <taxon>Bacilli</taxon>
        <taxon>Bacillales</taxon>
        <taxon>Staphylococcaceae</taxon>
        <taxon>Staphylococcus</taxon>
    </lineage>
</organism>
<feature type="chain" id="PRO_1000087521" description="UPF0297 protein SaurJH9_1674">
    <location>
        <begin position="1"/>
        <end position="86"/>
    </location>
</feature>
<protein>
    <recommendedName>
        <fullName evidence="1">UPF0297 protein SaurJH9_1674</fullName>
    </recommendedName>
</protein>
<reference key="1">
    <citation type="submission" date="2007-05" db="EMBL/GenBank/DDBJ databases">
        <title>Complete sequence of chromosome of Staphylococcus aureus subsp. aureus JH9.</title>
        <authorList>
            <consortium name="US DOE Joint Genome Institute"/>
            <person name="Copeland A."/>
            <person name="Lucas S."/>
            <person name="Lapidus A."/>
            <person name="Barry K."/>
            <person name="Detter J.C."/>
            <person name="Glavina del Rio T."/>
            <person name="Hammon N."/>
            <person name="Israni S."/>
            <person name="Pitluck S."/>
            <person name="Chain P."/>
            <person name="Malfatti S."/>
            <person name="Shin M."/>
            <person name="Vergez L."/>
            <person name="Schmutz J."/>
            <person name="Larimer F."/>
            <person name="Land M."/>
            <person name="Hauser L."/>
            <person name="Kyrpides N."/>
            <person name="Kim E."/>
            <person name="Tomasz A."/>
            <person name="Richardson P."/>
        </authorList>
    </citation>
    <scope>NUCLEOTIDE SEQUENCE [LARGE SCALE GENOMIC DNA]</scope>
    <source>
        <strain>JH9</strain>
    </source>
</reference>
<dbReference type="EMBL" id="CP000703">
    <property type="protein sequence ID" value="ABQ49465.1"/>
    <property type="molecule type" value="Genomic_DNA"/>
</dbReference>
<dbReference type="RefSeq" id="WP_000426912.1">
    <property type="nucleotide sequence ID" value="NC_009487.1"/>
</dbReference>
<dbReference type="SMR" id="A5ITE2"/>
<dbReference type="KEGG" id="saj:SaurJH9_1674"/>
<dbReference type="HOGENOM" id="CLU_162466_0_0_9"/>
<dbReference type="HAMAP" id="MF_01507">
    <property type="entry name" value="UPF0297"/>
    <property type="match status" value="1"/>
</dbReference>
<dbReference type="InterPro" id="IPR009309">
    <property type="entry name" value="IreB"/>
</dbReference>
<dbReference type="NCBIfam" id="NF003997">
    <property type="entry name" value="PRK05473.1"/>
    <property type="match status" value="1"/>
</dbReference>
<dbReference type="PANTHER" id="PTHR40067">
    <property type="entry name" value="UPF0297 PROTEIN YRZL"/>
    <property type="match status" value="1"/>
</dbReference>
<dbReference type="PANTHER" id="PTHR40067:SF1">
    <property type="entry name" value="UPF0297 PROTEIN YRZL"/>
    <property type="match status" value="1"/>
</dbReference>
<dbReference type="Pfam" id="PF06135">
    <property type="entry name" value="IreB"/>
    <property type="match status" value="1"/>
</dbReference>
<dbReference type="PIRSF" id="PIRSF037258">
    <property type="entry name" value="DUF965_bac"/>
    <property type="match status" value="1"/>
</dbReference>